<comment type="function">
    <text evidence="1">Catalyzes the NADPH-dependent reduction of a wide variety of carbonyl-containing compounds to their corresponding alcohols with a broad range of catalytic efficiencies.</text>
</comment>
<comment type="catalytic activity">
    <reaction>
        <text>an alditol + NAD(+) = an aldose + NADH + H(+)</text>
        <dbReference type="Rhea" id="RHEA:12785"/>
        <dbReference type="Rhea" id="RHEA-COMP:9554"/>
        <dbReference type="Rhea" id="RHEA-COMP:9555"/>
        <dbReference type="ChEBI" id="CHEBI:15378"/>
        <dbReference type="ChEBI" id="CHEBI:15693"/>
        <dbReference type="ChEBI" id="CHEBI:17522"/>
        <dbReference type="ChEBI" id="CHEBI:57540"/>
        <dbReference type="ChEBI" id="CHEBI:57945"/>
        <dbReference type="EC" id="1.1.1.21"/>
    </reaction>
</comment>
<comment type="catalytic activity">
    <reaction>
        <text>an alditol + NADP(+) = an aldose + NADPH + H(+)</text>
        <dbReference type="Rhea" id="RHEA:12789"/>
        <dbReference type="Rhea" id="RHEA-COMP:9554"/>
        <dbReference type="Rhea" id="RHEA-COMP:9555"/>
        <dbReference type="ChEBI" id="CHEBI:15378"/>
        <dbReference type="ChEBI" id="CHEBI:15693"/>
        <dbReference type="ChEBI" id="CHEBI:17522"/>
        <dbReference type="ChEBI" id="CHEBI:57783"/>
        <dbReference type="ChEBI" id="CHEBI:58349"/>
        <dbReference type="EC" id="1.1.1.21"/>
    </reaction>
</comment>
<comment type="similarity">
    <text evidence="3">Belongs to the aldo/keto reductase family.</text>
</comment>
<proteinExistence type="inferred from homology"/>
<dbReference type="EC" id="1.1.1.21"/>
<dbReference type="EMBL" id="AAFI02000003">
    <property type="protein sequence ID" value="EAL73482.1"/>
    <property type="molecule type" value="Genomic_DNA"/>
</dbReference>
<dbReference type="RefSeq" id="XP_647520.1">
    <property type="nucleotide sequence ID" value="XM_642428.1"/>
</dbReference>
<dbReference type="SMR" id="Q55FL3"/>
<dbReference type="FunCoup" id="Q55FL3">
    <property type="interactions" value="129"/>
</dbReference>
<dbReference type="STRING" id="44689.Q55FL3"/>
<dbReference type="PaxDb" id="44689-DDB0231284"/>
<dbReference type="EnsemblProtists" id="EAL73482">
    <property type="protein sequence ID" value="EAL73482"/>
    <property type="gene ID" value="DDB_G0268058"/>
</dbReference>
<dbReference type="GeneID" id="8616327"/>
<dbReference type="KEGG" id="ddi:DDB_G0268058"/>
<dbReference type="dictyBase" id="DDB_G0268058">
    <property type="gene designation" value="alrC"/>
</dbReference>
<dbReference type="VEuPathDB" id="AmoebaDB:DDB_G0268058"/>
<dbReference type="eggNOG" id="KOG1577">
    <property type="taxonomic scope" value="Eukaryota"/>
</dbReference>
<dbReference type="HOGENOM" id="CLU_023205_0_0_1"/>
<dbReference type="InParanoid" id="Q55FL3"/>
<dbReference type="OMA" id="VHWPSEG"/>
<dbReference type="PhylomeDB" id="Q55FL3"/>
<dbReference type="Reactome" id="R-DDI-156590">
    <property type="pathway name" value="Glutathione conjugation"/>
</dbReference>
<dbReference type="Reactome" id="R-DDI-193144">
    <property type="pathway name" value="Estrogen biosynthesis"/>
</dbReference>
<dbReference type="Reactome" id="R-DDI-193368">
    <property type="pathway name" value="Synthesis of bile acids and bile salts via 7alpha-hydroxycholesterol"/>
</dbReference>
<dbReference type="Reactome" id="R-DDI-193775">
    <property type="pathway name" value="Synthesis of bile acids and bile salts via 24-hydroxycholesterol"/>
</dbReference>
<dbReference type="Reactome" id="R-DDI-193807">
    <property type="pathway name" value="Synthesis of bile acids and bile salts via 27-hydroxycholesterol"/>
</dbReference>
<dbReference type="Reactome" id="R-DDI-2162123">
    <property type="pathway name" value="Synthesis of Prostaglandins (PG) and Thromboxanes (TX)"/>
</dbReference>
<dbReference type="Reactome" id="R-DDI-5365859">
    <property type="pathway name" value="RA biosynthesis pathway"/>
</dbReference>
<dbReference type="Reactome" id="R-DDI-5661270">
    <property type="pathway name" value="Formation of xylulose-5-phosphate"/>
</dbReference>
<dbReference type="Reactome" id="R-DDI-9757110">
    <property type="pathway name" value="Prednisone ADME"/>
</dbReference>
<dbReference type="PRO" id="PR:Q55FL3"/>
<dbReference type="Proteomes" id="UP000002195">
    <property type="component" value="Chromosome 1"/>
</dbReference>
<dbReference type="GO" id="GO:0005829">
    <property type="term" value="C:cytosol"/>
    <property type="evidence" value="ECO:0000318"/>
    <property type="project" value="GO_Central"/>
</dbReference>
<dbReference type="GO" id="GO:0004032">
    <property type="term" value="F:aldose reductase (NADPH) activity"/>
    <property type="evidence" value="ECO:0000318"/>
    <property type="project" value="GO_Central"/>
</dbReference>
<dbReference type="GO" id="GO:0043795">
    <property type="term" value="F:glyceraldehyde oxidoreductase activity"/>
    <property type="evidence" value="ECO:0000250"/>
    <property type="project" value="dictyBase"/>
</dbReference>
<dbReference type="GO" id="GO:1901135">
    <property type="term" value="P:carbohydrate derivative metabolic process"/>
    <property type="evidence" value="ECO:0000250"/>
    <property type="project" value="dictyBase"/>
</dbReference>
<dbReference type="CDD" id="cd19071">
    <property type="entry name" value="AKR_AKR1-5-like"/>
    <property type="match status" value="1"/>
</dbReference>
<dbReference type="FunFam" id="3.20.20.100:FF:000007">
    <property type="entry name" value="NAD(P)H-dependent D-xylose reductase xyl1"/>
    <property type="match status" value="1"/>
</dbReference>
<dbReference type="Gene3D" id="3.20.20.100">
    <property type="entry name" value="NADP-dependent oxidoreductase domain"/>
    <property type="match status" value="1"/>
</dbReference>
<dbReference type="InterPro" id="IPR020471">
    <property type="entry name" value="AKR"/>
</dbReference>
<dbReference type="InterPro" id="IPR018170">
    <property type="entry name" value="Aldo/ket_reductase_CS"/>
</dbReference>
<dbReference type="InterPro" id="IPR023210">
    <property type="entry name" value="NADP_OxRdtase_dom"/>
</dbReference>
<dbReference type="InterPro" id="IPR036812">
    <property type="entry name" value="NADP_OxRdtase_dom_sf"/>
</dbReference>
<dbReference type="PANTHER" id="PTHR11732">
    <property type="entry name" value="ALDO/KETO REDUCTASE"/>
    <property type="match status" value="1"/>
</dbReference>
<dbReference type="Pfam" id="PF00248">
    <property type="entry name" value="Aldo_ket_red"/>
    <property type="match status" value="1"/>
</dbReference>
<dbReference type="PIRSF" id="PIRSF000097">
    <property type="entry name" value="AKR"/>
    <property type="match status" value="1"/>
</dbReference>
<dbReference type="PRINTS" id="PR00069">
    <property type="entry name" value="ALDKETRDTASE"/>
</dbReference>
<dbReference type="SUPFAM" id="SSF51430">
    <property type="entry name" value="NAD(P)-linked oxidoreductase"/>
    <property type="match status" value="1"/>
</dbReference>
<dbReference type="PROSITE" id="PS00798">
    <property type="entry name" value="ALDOKETO_REDUCTASE_1"/>
    <property type="match status" value="1"/>
</dbReference>
<dbReference type="PROSITE" id="PS00062">
    <property type="entry name" value="ALDOKETO_REDUCTASE_2"/>
    <property type="match status" value="1"/>
</dbReference>
<sequence>MFQNNYNNNTNYNNNNFKLNDGNQIPSIGLGTYYSENPGEVGDAINNALKNGYRHIDGAAFYGNEKVIGNSLKEIFKEGEIKREDIFYTSKLWNSCHNSNLVVKHCVKTIEDLGIGYLDLYLIHWPIAFENSNPLGLTIEPLRDQNGNPIIAPVSIRETWQEMEKLVELGLVKSIGVSNFNVQNLVDLLTYAKIKPVVNQVEIHPYLTQFKLQEYCDKYEIKLVAYSPLGQGKCDFFSNKILKSIAGKYKKSVANVIFKWLNQRGIAAIPKSGNHSRIIENFNIFDFQLSNDDIEKINSLNANIRTCSPITFFGTPFYLFD</sequence>
<organism>
    <name type="scientific">Dictyostelium discoideum</name>
    <name type="common">Social amoeba</name>
    <dbReference type="NCBI Taxonomy" id="44689"/>
    <lineage>
        <taxon>Eukaryota</taxon>
        <taxon>Amoebozoa</taxon>
        <taxon>Evosea</taxon>
        <taxon>Eumycetozoa</taxon>
        <taxon>Dictyostelia</taxon>
        <taxon>Dictyosteliales</taxon>
        <taxon>Dictyosteliaceae</taxon>
        <taxon>Dictyostelium</taxon>
    </lineage>
</organism>
<keyword id="KW-0521">NADP</keyword>
<keyword id="KW-0560">Oxidoreductase</keyword>
<keyword id="KW-1185">Reference proteome</keyword>
<accession>Q55FL3</accession>
<feature type="chain" id="PRO_0000327647" description="Aldose reductase C">
    <location>
        <begin position="1"/>
        <end position="321"/>
    </location>
</feature>
<feature type="active site" description="Proton donor" evidence="1">
    <location>
        <position position="62"/>
    </location>
</feature>
<feature type="binding site" evidence="2">
    <location>
        <begin position="22"/>
        <end position="31"/>
    </location>
    <ligand>
        <name>NADP(+)</name>
        <dbReference type="ChEBI" id="CHEBI:58349"/>
    </ligand>
</feature>
<feature type="binding site" evidence="1">
    <location>
        <position position="124"/>
    </location>
    <ligand>
        <name>substrate</name>
    </ligand>
</feature>
<feature type="binding site" evidence="1">
    <location>
        <begin position="227"/>
        <end position="281"/>
    </location>
    <ligand>
        <name>NADP(+)</name>
        <dbReference type="ChEBI" id="CHEBI:58349"/>
    </ligand>
</feature>
<evidence type="ECO:0000250" key="1"/>
<evidence type="ECO:0000255" key="2"/>
<evidence type="ECO:0000305" key="3"/>
<reference key="1">
    <citation type="journal article" date="2005" name="Nature">
        <title>The genome of the social amoeba Dictyostelium discoideum.</title>
        <authorList>
            <person name="Eichinger L."/>
            <person name="Pachebat J.A."/>
            <person name="Gloeckner G."/>
            <person name="Rajandream M.A."/>
            <person name="Sucgang R."/>
            <person name="Berriman M."/>
            <person name="Song J."/>
            <person name="Olsen R."/>
            <person name="Szafranski K."/>
            <person name="Xu Q."/>
            <person name="Tunggal B."/>
            <person name="Kummerfeld S."/>
            <person name="Madera M."/>
            <person name="Konfortov B.A."/>
            <person name="Rivero F."/>
            <person name="Bankier A.T."/>
            <person name="Lehmann R."/>
            <person name="Hamlin N."/>
            <person name="Davies R."/>
            <person name="Gaudet P."/>
            <person name="Fey P."/>
            <person name="Pilcher K."/>
            <person name="Chen G."/>
            <person name="Saunders D."/>
            <person name="Sodergren E.J."/>
            <person name="Davis P."/>
            <person name="Kerhornou A."/>
            <person name="Nie X."/>
            <person name="Hall N."/>
            <person name="Anjard C."/>
            <person name="Hemphill L."/>
            <person name="Bason N."/>
            <person name="Farbrother P."/>
            <person name="Desany B."/>
            <person name="Just E."/>
            <person name="Morio T."/>
            <person name="Rost R."/>
            <person name="Churcher C.M."/>
            <person name="Cooper J."/>
            <person name="Haydock S."/>
            <person name="van Driessche N."/>
            <person name="Cronin A."/>
            <person name="Goodhead I."/>
            <person name="Muzny D.M."/>
            <person name="Mourier T."/>
            <person name="Pain A."/>
            <person name="Lu M."/>
            <person name="Harper D."/>
            <person name="Lindsay R."/>
            <person name="Hauser H."/>
            <person name="James K.D."/>
            <person name="Quiles M."/>
            <person name="Madan Babu M."/>
            <person name="Saito T."/>
            <person name="Buchrieser C."/>
            <person name="Wardroper A."/>
            <person name="Felder M."/>
            <person name="Thangavelu M."/>
            <person name="Johnson D."/>
            <person name="Knights A."/>
            <person name="Loulseged H."/>
            <person name="Mungall K.L."/>
            <person name="Oliver K."/>
            <person name="Price C."/>
            <person name="Quail M.A."/>
            <person name="Urushihara H."/>
            <person name="Hernandez J."/>
            <person name="Rabbinowitsch E."/>
            <person name="Steffen D."/>
            <person name="Sanders M."/>
            <person name="Ma J."/>
            <person name="Kohara Y."/>
            <person name="Sharp S."/>
            <person name="Simmonds M.N."/>
            <person name="Spiegler S."/>
            <person name="Tivey A."/>
            <person name="Sugano S."/>
            <person name="White B."/>
            <person name="Walker D."/>
            <person name="Woodward J.R."/>
            <person name="Winckler T."/>
            <person name="Tanaka Y."/>
            <person name="Shaulsky G."/>
            <person name="Schleicher M."/>
            <person name="Weinstock G.M."/>
            <person name="Rosenthal A."/>
            <person name="Cox E.C."/>
            <person name="Chisholm R.L."/>
            <person name="Gibbs R.A."/>
            <person name="Loomis W.F."/>
            <person name="Platzer M."/>
            <person name="Kay R.R."/>
            <person name="Williams J.G."/>
            <person name="Dear P.H."/>
            <person name="Noegel A.A."/>
            <person name="Barrell B.G."/>
            <person name="Kuspa A."/>
        </authorList>
    </citation>
    <scope>NUCLEOTIDE SEQUENCE [LARGE SCALE GENOMIC DNA]</scope>
    <source>
        <strain>AX4</strain>
    </source>
</reference>
<gene>
    <name type="primary">alrC</name>
    <name type="ORF">DDB_G0268058</name>
</gene>
<name>ALRC_DICDI</name>
<protein>
    <recommendedName>
        <fullName>Aldose reductase C</fullName>
        <shortName>ARC</shortName>
        <ecNumber>1.1.1.21</ecNumber>
    </recommendedName>
    <alternativeName>
        <fullName>Aldehyde reductase C</fullName>
    </alternativeName>
</protein>